<sequence>MEHYLSLLIRSIFIENLALSFFLGMCTFLAVSKKVKTAMGLGIAVIVVQTVAVPANNLIYNYVLKDGVLVSGLDLSFLSFITFIGVIAALVQILEMALDKYFPALYNALGIFLPLITVNCAIFGGVSFMVQRDYNFVESVVYGVGSGAGWMLAIVAMAGIREKMKYSDVPQGLRGLGITFITAGLMALGFMSFSGISL</sequence>
<keyword id="KW-0997">Cell inner membrane</keyword>
<keyword id="KW-1003">Cell membrane</keyword>
<keyword id="KW-0406">Ion transport</keyword>
<keyword id="KW-0472">Membrane</keyword>
<keyword id="KW-0520">NAD</keyword>
<keyword id="KW-0915">Sodium</keyword>
<keyword id="KW-0739">Sodium transport</keyword>
<keyword id="KW-1278">Translocase</keyword>
<keyword id="KW-0812">Transmembrane</keyword>
<keyword id="KW-1133">Transmembrane helix</keyword>
<keyword id="KW-0813">Transport</keyword>
<keyword id="KW-0830">Ubiquinone</keyword>
<proteinExistence type="inferred from homology"/>
<protein>
    <recommendedName>
        <fullName evidence="1">Na(+)-translocating NADH-quinone reductase subunit E</fullName>
        <shortName evidence="1">Na(+)-NQR subunit E</shortName>
        <shortName evidence="1">Na(+)-translocating NQR subunit E</shortName>
        <ecNumber evidence="1">7.2.1.1</ecNumber>
    </recommendedName>
    <alternativeName>
        <fullName evidence="1">NQR complex subunit E</fullName>
    </alternativeName>
    <alternativeName>
        <fullName evidence="1">NQR-1 subunit E</fullName>
    </alternativeName>
</protein>
<comment type="function">
    <text evidence="1">NQR complex catalyzes the reduction of ubiquinone-1 to ubiquinol by two successive reactions, coupled with the transport of Na(+) ions from the cytoplasm to the periplasm. NqrA to NqrE are probably involved in the second step, the conversion of ubisemiquinone to ubiquinol.</text>
</comment>
<comment type="catalytic activity">
    <reaction evidence="1">
        <text>a ubiquinone + n Na(+)(in) + NADH + H(+) = a ubiquinol + n Na(+)(out) + NAD(+)</text>
        <dbReference type="Rhea" id="RHEA:47748"/>
        <dbReference type="Rhea" id="RHEA-COMP:9565"/>
        <dbReference type="Rhea" id="RHEA-COMP:9566"/>
        <dbReference type="ChEBI" id="CHEBI:15378"/>
        <dbReference type="ChEBI" id="CHEBI:16389"/>
        <dbReference type="ChEBI" id="CHEBI:17976"/>
        <dbReference type="ChEBI" id="CHEBI:29101"/>
        <dbReference type="ChEBI" id="CHEBI:57540"/>
        <dbReference type="ChEBI" id="CHEBI:57945"/>
        <dbReference type="EC" id="7.2.1.1"/>
    </reaction>
</comment>
<comment type="subunit">
    <text evidence="1">Composed of six subunits; NqrA, NqrB, NqrC, NqrD, NqrE and NqrF.</text>
</comment>
<comment type="subcellular location">
    <subcellularLocation>
        <location evidence="1">Cell inner membrane</location>
        <topology evidence="1">Multi-pass membrane protein</topology>
    </subcellularLocation>
</comment>
<comment type="similarity">
    <text evidence="1">Belongs to the NqrDE/RnfAE family.</text>
</comment>
<evidence type="ECO:0000255" key="1">
    <source>
        <dbReference type="HAMAP-Rule" id="MF_00429"/>
    </source>
</evidence>
<reference key="1">
    <citation type="journal article" date="2008" name="BMC Genomics">
        <title>The genome of Aeromonas salmonicida subsp. salmonicida A449: insights into the evolution of a fish pathogen.</title>
        <authorList>
            <person name="Reith M.E."/>
            <person name="Singh R.K."/>
            <person name="Curtis B."/>
            <person name="Boyd J.M."/>
            <person name="Bouevitch A."/>
            <person name="Kimball J."/>
            <person name="Munholland J."/>
            <person name="Murphy C."/>
            <person name="Sarty D."/>
            <person name="Williams J."/>
            <person name="Nash J.H."/>
            <person name="Johnson S.C."/>
            <person name="Brown L.L."/>
        </authorList>
    </citation>
    <scope>NUCLEOTIDE SEQUENCE [LARGE SCALE GENOMIC DNA]</scope>
    <source>
        <strain>A449</strain>
    </source>
</reference>
<feature type="chain" id="PRO_1000060185" description="Na(+)-translocating NADH-quinone reductase subunit E">
    <location>
        <begin position="1"/>
        <end position="198"/>
    </location>
</feature>
<feature type="transmembrane region" description="Helical" evidence="1">
    <location>
        <begin position="11"/>
        <end position="31"/>
    </location>
</feature>
<feature type="transmembrane region" description="Helical" evidence="1">
    <location>
        <begin position="39"/>
        <end position="59"/>
    </location>
</feature>
<feature type="transmembrane region" description="Helical" evidence="1">
    <location>
        <begin position="77"/>
        <end position="97"/>
    </location>
</feature>
<feature type="transmembrane region" description="Helical" evidence="1">
    <location>
        <begin position="110"/>
        <end position="130"/>
    </location>
</feature>
<feature type="transmembrane region" description="Helical" evidence="1">
    <location>
        <begin position="140"/>
        <end position="160"/>
    </location>
</feature>
<feature type="transmembrane region" description="Helical" evidence="1">
    <location>
        <begin position="176"/>
        <end position="196"/>
    </location>
</feature>
<accession>A4SQL6</accession>
<name>NQRE_AERS4</name>
<organism>
    <name type="scientific">Aeromonas salmonicida (strain A449)</name>
    <dbReference type="NCBI Taxonomy" id="382245"/>
    <lineage>
        <taxon>Bacteria</taxon>
        <taxon>Pseudomonadati</taxon>
        <taxon>Pseudomonadota</taxon>
        <taxon>Gammaproteobacteria</taxon>
        <taxon>Aeromonadales</taxon>
        <taxon>Aeromonadaceae</taxon>
        <taxon>Aeromonas</taxon>
    </lineage>
</organism>
<gene>
    <name evidence="1" type="primary">nqrE</name>
    <name type="ordered locus">ASA_3195</name>
</gene>
<dbReference type="EC" id="7.2.1.1" evidence="1"/>
<dbReference type="EMBL" id="CP000644">
    <property type="protein sequence ID" value="ABO91188.1"/>
    <property type="molecule type" value="Genomic_DNA"/>
</dbReference>
<dbReference type="RefSeq" id="WP_005311986.1">
    <property type="nucleotide sequence ID" value="NC_009348.1"/>
</dbReference>
<dbReference type="SMR" id="A4SQL6"/>
<dbReference type="STRING" id="29491.GCA_000820065_03575"/>
<dbReference type="GeneID" id="79880918"/>
<dbReference type="KEGG" id="asa:ASA_3195"/>
<dbReference type="eggNOG" id="COG2209">
    <property type="taxonomic scope" value="Bacteria"/>
</dbReference>
<dbReference type="HOGENOM" id="CLU_095255_0_0_6"/>
<dbReference type="Proteomes" id="UP000000225">
    <property type="component" value="Chromosome"/>
</dbReference>
<dbReference type="GO" id="GO:0009276">
    <property type="term" value="C:Gram-negative-bacterium-type cell wall"/>
    <property type="evidence" value="ECO:0007669"/>
    <property type="project" value="InterPro"/>
</dbReference>
<dbReference type="GO" id="GO:0005886">
    <property type="term" value="C:plasma membrane"/>
    <property type="evidence" value="ECO:0007669"/>
    <property type="project" value="UniProtKB-SubCell"/>
</dbReference>
<dbReference type="GO" id="GO:0016655">
    <property type="term" value="F:oxidoreductase activity, acting on NAD(P)H, quinone or similar compound as acceptor"/>
    <property type="evidence" value="ECO:0007669"/>
    <property type="project" value="UniProtKB-UniRule"/>
</dbReference>
<dbReference type="GO" id="GO:0022904">
    <property type="term" value="P:respiratory electron transport chain"/>
    <property type="evidence" value="ECO:0007669"/>
    <property type="project" value="InterPro"/>
</dbReference>
<dbReference type="GO" id="GO:0006814">
    <property type="term" value="P:sodium ion transport"/>
    <property type="evidence" value="ECO:0007669"/>
    <property type="project" value="UniProtKB-UniRule"/>
</dbReference>
<dbReference type="HAMAP" id="MF_00429">
    <property type="entry name" value="NqrE"/>
    <property type="match status" value="1"/>
</dbReference>
<dbReference type="InterPro" id="IPR003667">
    <property type="entry name" value="NqrDE/RnfAE"/>
</dbReference>
<dbReference type="InterPro" id="IPR050133">
    <property type="entry name" value="NqrDE/RnfAE_oxidrdctase"/>
</dbReference>
<dbReference type="InterPro" id="IPR010967">
    <property type="entry name" value="NqrE"/>
</dbReference>
<dbReference type="NCBIfam" id="TIGR01940">
    <property type="entry name" value="nqrE"/>
    <property type="match status" value="1"/>
</dbReference>
<dbReference type="PANTHER" id="PTHR30335">
    <property type="entry name" value="INTEGRAL MEMBRANE PROTEIN OF SOXR-REDUCING COMPLEX"/>
    <property type="match status" value="1"/>
</dbReference>
<dbReference type="PANTHER" id="PTHR30335:SF1">
    <property type="entry name" value="NA(+)-TRANSLOCATING NADH-QUINONE REDUCTASE SUBUNIT E"/>
    <property type="match status" value="1"/>
</dbReference>
<dbReference type="Pfam" id="PF02508">
    <property type="entry name" value="Rnf-Nqr"/>
    <property type="match status" value="1"/>
</dbReference>
<dbReference type="PIRSF" id="PIRSF006102">
    <property type="entry name" value="NQR_DE"/>
    <property type="match status" value="1"/>
</dbReference>